<feature type="chain" id="PRO_0000137627" description="Small ribosomal subunit protein eS24">
    <location>
        <begin position="1"/>
        <end position="132"/>
    </location>
</feature>
<feature type="region of interest" description="Disordered" evidence="2">
    <location>
        <begin position="90"/>
        <end position="132"/>
    </location>
</feature>
<feature type="compositionally biased region" description="Basic and acidic residues" evidence="2">
    <location>
        <begin position="90"/>
        <end position="100"/>
    </location>
</feature>
<feature type="compositionally biased region" description="Basic residues" evidence="2">
    <location>
        <begin position="101"/>
        <end position="121"/>
    </location>
</feature>
<keyword id="KW-0963">Cytoplasm</keyword>
<keyword id="KW-1185">Reference proteome</keyword>
<keyword id="KW-0687">Ribonucleoprotein</keyword>
<keyword id="KW-0689">Ribosomal protein</keyword>
<sequence length="132" mass="15305">MNDTVTVRTRKFMTNRLLQRKQMVVDVLHPGKATVPKTEIREKLAKMYKTTPDVVFVFGFRTQFGGGKTTGFAMVYDSLDYAKKNEPKHRLARHGLFEKKKTSRKQRKERKNRMKKVRGTKKASVGASKKKD</sequence>
<organism>
    <name type="scientific">Takifugu rubripes</name>
    <name type="common">Japanese pufferfish</name>
    <name type="synonym">Fugu rubripes</name>
    <dbReference type="NCBI Taxonomy" id="31033"/>
    <lineage>
        <taxon>Eukaryota</taxon>
        <taxon>Metazoa</taxon>
        <taxon>Chordata</taxon>
        <taxon>Craniata</taxon>
        <taxon>Vertebrata</taxon>
        <taxon>Euteleostomi</taxon>
        <taxon>Actinopterygii</taxon>
        <taxon>Neopterygii</taxon>
        <taxon>Teleostei</taxon>
        <taxon>Neoteleostei</taxon>
        <taxon>Acanthomorphata</taxon>
        <taxon>Eupercaria</taxon>
        <taxon>Tetraodontiformes</taxon>
        <taxon>Tetradontoidea</taxon>
        <taxon>Tetraodontidae</taxon>
        <taxon>Takifugu</taxon>
    </lineage>
</organism>
<name>RS24_TAKRU</name>
<reference key="1">
    <citation type="submission" date="1997-09" db="EMBL/GenBank/DDBJ databases">
        <authorList>
            <person name="Crosio C."/>
            <person name="Cecconi F."/>
            <person name="Giorgi M."/>
            <person name="Amaldi F."/>
            <person name="Mariottini P."/>
        </authorList>
    </citation>
    <scope>NUCLEOTIDE SEQUENCE [GENOMIC DNA]</scope>
</reference>
<gene>
    <name type="primary">rps24</name>
</gene>
<accession>O42387</accession>
<proteinExistence type="inferred from homology"/>
<dbReference type="EMBL" id="AJ001398">
    <property type="protein sequence ID" value="CAA04728.1"/>
    <property type="molecule type" value="Genomic_DNA"/>
</dbReference>
<dbReference type="SMR" id="O42387"/>
<dbReference type="STRING" id="31033.ENSTRUP00000082261"/>
<dbReference type="eggNOG" id="KOG3424">
    <property type="taxonomic scope" value="Eukaryota"/>
</dbReference>
<dbReference type="InParanoid" id="O42387"/>
<dbReference type="Proteomes" id="UP000005226">
    <property type="component" value="Unplaced"/>
</dbReference>
<dbReference type="GO" id="GO:0005737">
    <property type="term" value="C:cytoplasm"/>
    <property type="evidence" value="ECO:0007669"/>
    <property type="project" value="UniProtKB-SubCell"/>
</dbReference>
<dbReference type="GO" id="GO:0044391">
    <property type="term" value="C:ribosomal subunit"/>
    <property type="evidence" value="ECO:0007669"/>
    <property type="project" value="UniProtKB-ARBA"/>
</dbReference>
<dbReference type="GO" id="GO:0003735">
    <property type="term" value="F:structural constituent of ribosome"/>
    <property type="evidence" value="ECO:0007669"/>
    <property type="project" value="InterPro"/>
</dbReference>
<dbReference type="GO" id="GO:0006412">
    <property type="term" value="P:translation"/>
    <property type="evidence" value="ECO:0007669"/>
    <property type="project" value="InterPro"/>
</dbReference>
<dbReference type="FunFam" id="3.30.70.3370:FF:000001">
    <property type="entry name" value="40S ribosomal protein S24"/>
    <property type="match status" value="1"/>
</dbReference>
<dbReference type="Gene3D" id="3.30.70.3370">
    <property type="match status" value="1"/>
</dbReference>
<dbReference type="HAMAP" id="MF_00545">
    <property type="entry name" value="Ribosomal_eS24"/>
    <property type="match status" value="1"/>
</dbReference>
<dbReference type="InterPro" id="IPR053709">
    <property type="entry name" value="eRP_eS24_sf"/>
</dbReference>
<dbReference type="InterPro" id="IPR001976">
    <property type="entry name" value="Ribosomal_eS24"/>
</dbReference>
<dbReference type="InterPro" id="IPR018098">
    <property type="entry name" value="Ribosomal_eS24_CS"/>
</dbReference>
<dbReference type="InterPro" id="IPR012678">
    <property type="entry name" value="Ribosomal_uL23/eL15/eS24_sf"/>
</dbReference>
<dbReference type="PANTHER" id="PTHR10496">
    <property type="entry name" value="40S RIBOSOMAL PROTEIN S24"/>
    <property type="match status" value="1"/>
</dbReference>
<dbReference type="Pfam" id="PF01282">
    <property type="entry name" value="Ribosomal_S24e"/>
    <property type="match status" value="1"/>
</dbReference>
<dbReference type="SUPFAM" id="SSF54189">
    <property type="entry name" value="Ribosomal proteins S24e, L23 and L15e"/>
    <property type="match status" value="1"/>
</dbReference>
<dbReference type="PROSITE" id="PS00529">
    <property type="entry name" value="RIBOSOMAL_S24E"/>
    <property type="match status" value="1"/>
</dbReference>
<protein>
    <recommendedName>
        <fullName evidence="3">Small ribosomal subunit protein eS24</fullName>
    </recommendedName>
    <alternativeName>
        <fullName>40S ribosomal protein S24</fullName>
    </alternativeName>
</protein>
<comment type="function">
    <text evidence="1">Component of the small ribosomal subunit. The ribosome is a large ribonucleoprotein complex responsible for the synthesis of proteins in the cell. Required for processing of pre-rRNA and maturation of 40S ribosomal subunits.</text>
</comment>
<comment type="subunit">
    <text evidence="1">Component of the small ribosomal subunit.</text>
</comment>
<comment type="subcellular location">
    <subcellularLocation>
        <location evidence="1">Cytoplasm</location>
    </subcellularLocation>
</comment>
<comment type="similarity">
    <text evidence="3">Belongs to the eukaryotic ribosomal protein eS24 family.</text>
</comment>
<evidence type="ECO:0000250" key="1">
    <source>
        <dbReference type="UniProtKB" id="P62847"/>
    </source>
</evidence>
<evidence type="ECO:0000256" key="2">
    <source>
        <dbReference type="SAM" id="MobiDB-lite"/>
    </source>
</evidence>
<evidence type="ECO:0000305" key="3"/>